<accession>E6ER18</accession>
<accession>Q9K596</accession>
<organism>
    <name type="scientific">Enterococcus faecalis (strain TX4000 / JH2-2)</name>
    <dbReference type="NCBI Taxonomy" id="749493"/>
    <lineage>
        <taxon>Bacteria</taxon>
        <taxon>Bacillati</taxon>
        <taxon>Bacillota</taxon>
        <taxon>Bacilli</taxon>
        <taxon>Lactobacillales</taxon>
        <taxon>Enterococcaceae</taxon>
        <taxon>Enterococcus</taxon>
    </lineage>
</organism>
<sequence>MSIITDIYAREVLDSRGNPTIEVEVYTESGAFGRGMVPSGASTGEYEAVELRDGDKARYLGKGVTKAVDNVNNIIAEAIIGYDVRDQMAIDKAMIDLDGTPNKGKLGANAILGVSIAVARAAADYLEVPLYHYLGGFNTKVLPTPMMNIINGGSHADNSIDFQEFMIMPVGAPTFKEALRMGAEVFHALASILKGRGLATSVGDEGGFAPNLGSNEEGFEVIIEAIEKAGYVPGKDVVLAMDAASSEFYDKEKGVYVLADSGEGEKTTEEMIAFYEELVSKYPIISIEDGLDENDWDGFKKLTEVLGDKVQLVGDDLFVTNTTKLAEGIEKGIANSILIKVNQIGTLTETFEAIEMAKEAGYTAVVSHRSGETEDSTISDIAVATNAGQIKTGSLSRTDRIAKYNQLLRIEDQLGDVAEYKGLKSFYNLKNK</sequence>
<evidence type="ECO:0000250" key="1">
    <source>
        <dbReference type="UniProtKB" id="P9WNL1"/>
    </source>
</evidence>
<evidence type="ECO:0000255" key="2">
    <source>
        <dbReference type="HAMAP-Rule" id="MF_00318"/>
    </source>
</evidence>
<evidence type="ECO:0000269" key="3">
    <source>
    </source>
</evidence>
<evidence type="ECO:0000305" key="4">
    <source>
    </source>
</evidence>
<comment type="function">
    <text evidence="2">Catalyzes the reversible conversion of 2-phosphoglycerate (2-PG) into phosphoenolpyruvate (PEP). It is essential for the degradation of carbohydrates via glycolysis.</text>
</comment>
<comment type="function">
    <text evidence="1">'Moonlights' as a plasminogen receptor and often plasmin activator. Plasminogen binding increases bacterial adherence to host cells; plasmin activity leads to degradation of host extracellular matrix proteins, facilitating bacterial dissemination and disease spread.</text>
</comment>
<comment type="catalytic activity">
    <reaction evidence="2">
        <text>(2R)-2-phosphoglycerate = phosphoenolpyruvate + H2O</text>
        <dbReference type="Rhea" id="RHEA:10164"/>
        <dbReference type="ChEBI" id="CHEBI:15377"/>
        <dbReference type="ChEBI" id="CHEBI:58289"/>
        <dbReference type="ChEBI" id="CHEBI:58702"/>
        <dbReference type="EC" id="4.2.1.11"/>
    </reaction>
</comment>
<comment type="cofactor">
    <cofactor evidence="2">
        <name>Mg(2+)</name>
        <dbReference type="ChEBI" id="CHEBI:18420"/>
    </cofactor>
    <text evidence="2">Binds a second Mg(2+) ion via substrate during catalysis.</text>
</comment>
<comment type="activity regulation">
    <text evidence="4">Covalent binding to the substrate (probably 2-PG) at Lys-340 of a small fraction of enolase causes inactivation of the enzyme, and possibly serves as a signal for the export of the protein.</text>
</comment>
<comment type="pathway">
    <text evidence="2">Carbohydrate degradation; glycolysis; pyruvate from D-glyceraldehyde 3-phosphate: step 4/5.</text>
</comment>
<comment type="subcellular location">
    <subcellularLocation>
        <location evidence="2">Cytoplasm</location>
    </subcellularLocation>
    <subcellularLocation>
        <location evidence="2">Secreted</location>
    </subcellularLocation>
    <subcellularLocation>
        <location evidence="2">Cell surface</location>
    </subcellularLocation>
    <text evidence="2 4">Fractions of enolase are present in both the cytoplasm and on the cell surface.</text>
</comment>
<comment type="similarity">
    <text evidence="2">Belongs to the enolase family.</text>
</comment>
<proteinExistence type="evidence at protein level"/>
<feature type="initiator methionine" description="Removed" evidence="3">
    <location>
        <position position="1"/>
    </location>
</feature>
<feature type="chain" id="PRO_0000422420" description="Enolase">
    <location>
        <begin position="2"/>
        <end position="432"/>
    </location>
</feature>
<feature type="active site" description="Proton donor" evidence="2">
    <location>
        <position position="205"/>
    </location>
</feature>
<feature type="active site" description="Proton acceptor" evidence="2">
    <location>
        <position position="340"/>
    </location>
</feature>
<feature type="binding site" evidence="2">
    <location>
        <position position="163"/>
    </location>
    <ligand>
        <name>(2R)-2-phosphoglycerate</name>
        <dbReference type="ChEBI" id="CHEBI:58289"/>
    </ligand>
</feature>
<feature type="binding site" evidence="2">
    <location>
        <position position="242"/>
    </location>
    <ligand>
        <name>Mg(2+)</name>
        <dbReference type="ChEBI" id="CHEBI:18420"/>
    </ligand>
</feature>
<feature type="binding site" evidence="2">
    <location>
        <position position="288"/>
    </location>
    <ligand>
        <name>Mg(2+)</name>
        <dbReference type="ChEBI" id="CHEBI:18420"/>
    </ligand>
</feature>
<feature type="binding site" evidence="2">
    <location>
        <position position="315"/>
    </location>
    <ligand>
        <name>Mg(2+)</name>
        <dbReference type="ChEBI" id="CHEBI:18420"/>
    </ligand>
</feature>
<feature type="binding site" evidence="2">
    <location>
        <position position="340"/>
    </location>
    <ligand>
        <name>(2R)-2-phosphoglycerate</name>
        <dbReference type="ChEBI" id="CHEBI:58289"/>
    </ligand>
</feature>
<feature type="binding site" evidence="2">
    <location>
        <position position="369"/>
    </location>
    <ligand>
        <name>(2R)-2-phosphoglycerate</name>
        <dbReference type="ChEBI" id="CHEBI:58289"/>
    </ligand>
</feature>
<feature type="binding site" evidence="2">
    <location>
        <position position="370"/>
    </location>
    <ligand>
        <name>(2R)-2-phosphoglycerate</name>
        <dbReference type="ChEBI" id="CHEBI:58289"/>
    </ligand>
</feature>
<feature type="binding site" evidence="2">
    <location>
        <position position="391"/>
    </location>
    <ligand>
        <name>(2R)-2-phosphoglycerate</name>
        <dbReference type="ChEBI" id="CHEBI:58289"/>
    </ligand>
</feature>
<name>ENO_ENTFT</name>
<reference key="1">
    <citation type="submission" date="2000-06" db="EMBL/GenBank/DDBJ databases">
        <title>Characterisation of enolase from Enterococcus faecalis.</title>
        <authorList>
            <person name="Deutscher J."/>
            <person name="Boel G."/>
            <person name="Hartke A."/>
            <person name="Auffray Y."/>
        </authorList>
    </citation>
    <scope>NUCLEOTIDE SEQUENCE [GENOMIC DNA]</scope>
    <source>
        <strain>TX4000 / JH2-2</strain>
    </source>
</reference>
<reference key="2">
    <citation type="submission" date="2010-09" db="EMBL/GenBank/DDBJ databases">
        <authorList>
            <person name="Weinstock G."/>
            <person name="Sodergren E."/>
            <person name="Clifton S."/>
            <person name="Fulton L."/>
            <person name="Fulton B."/>
            <person name="Courtney L."/>
            <person name="Fronick C."/>
            <person name="Harrison M."/>
            <person name="Strong C."/>
            <person name="Farmer C."/>
            <person name="Delahaunty K."/>
            <person name="Markovic C."/>
            <person name="Hall O."/>
            <person name="Minx P."/>
            <person name="Tomlinson C."/>
            <person name="Mitreva M."/>
            <person name="Hou S."/>
            <person name="Chen J."/>
            <person name="Wollam A."/>
            <person name="Pepin K.H."/>
            <person name="Johnson M."/>
            <person name="Bhonagiri V."/>
            <person name="Zhang X."/>
            <person name="Suruliraj S."/>
            <person name="Warren W."/>
            <person name="Chinwalla A."/>
            <person name="Mardis E.R."/>
            <person name="Wilson R.K."/>
        </authorList>
    </citation>
    <scope>NUCLEOTIDE SEQUENCE [LARGE SCALE GENOMIC DNA]</scope>
    <source>
        <strain>TX4000 / JH2-2</strain>
    </source>
</reference>
<reference key="3">
    <citation type="journal article" date="2004" name="J. Mol. Biol.">
        <title>Is 2-phosphoglycerate-dependent automodification of bacterial enolases implicated in their export?</title>
        <authorList>
            <person name="Boeel G."/>
            <person name="Pichereau V."/>
            <person name="Mijakovic I."/>
            <person name="Maze A."/>
            <person name="Poncet S."/>
            <person name="Gillet S."/>
            <person name="Giard J.-C."/>
            <person name="Hartke A."/>
            <person name="Auffray Y."/>
            <person name="Deutscher J."/>
        </authorList>
    </citation>
    <scope>PROTEIN SEQUENCE OF 2-8</scope>
    <scope>COVALENT SUBSTRATE BINDING</scope>
    <scope>ACTIVITY REGULATION</scope>
    <source>
        <strain>TX4000 / JH2-2</strain>
    </source>
</reference>
<dbReference type="EC" id="4.2.1.11" evidence="2"/>
<dbReference type="EMBL" id="AJ401152">
    <property type="protein sequence ID" value="CAB94910.1"/>
    <property type="molecule type" value="Genomic_DNA"/>
</dbReference>
<dbReference type="EMBL" id="AEBB01000058">
    <property type="protein sequence ID" value="EFT40819.1"/>
    <property type="molecule type" value="Genomic_DNA"/>
</dbReference>
<dbReference type="RefSeq" id="WP_002357098.1">
    <property type="nucleotide sequence ID" value="NZ_GL476290.1"/>
</dbReference>
<dbReference type="SMR" id="E6ER18"/>
<dbReference type="GeneID" id="60894196"/>
<dbReference type="PATRIC" id="fig|749493.3.peg.2022"/>
<dbReference type="HOGENOM" id="CLU_031223_2_1_9"/>
<dbReference type="UniPathway" id="UPA00109">
    <property type="reaction ID" value="UER00187"/>
</dbReference>
<dbReference type="GO" id="GO:0009986">
    <property type="term" value="C:cell surface"/>
    <property type="evidence" value="ECO:0007669"/>
    <property type="project" value="UniProtKB-SubCell"/>
</dbReference>
<dbReference type="GO" id="GO:0005576">
    <property type="term" value="C:extracellular region"/>
    <property type="evidence" value="ECO:0007669"/>
    <property type="project" value="UniProtKB-SubCell"/>
</dbReference>
<dbReference type="GO" id="GO:0000015">
    <property type="term" value="C:phosphopyruvate hydratase complex"/>
    <property type="evidence" value="ECO:0007669"/>
    <property type="project" value="InterPro"/>
</dbReference>
<dbReference type="GO" id="GO:0000287">
    <property type="term" value="F:magnesium ion binding"/>
    <property type="evidence" value="ECO:0007669"/>
    <property type="project" value="UniProtKB-UniRule"/>
</dbReference>
<dbReference type="GO" id="GO:0004634">
    <property type="term" value="F:phosphopyruvate hydratase activity"/>
    <property type="evidence" value="ECO:0007669"/>
    <property type="project" value="UniProtKB-UniRule"/>
</dbReference>
<dbReference type="GO" id="GO:0006096">
    <property type="term" value="P:glycolytic process"/>
    <property type="evidence" value="ECO:0007669"/>
    <property type="project" value="UniProtKB-UniRule"/>
</dbReference>
<dbReference type="CDD" id="cd03313">
    <property type="entry name" value="enolase"/>
    <property type="match status" value="1"/>
</dbReference>
<dbReference type="FunFam" id="3.20.20.120:FF:000001">
    <property type="entry name" value="Enolase"/>
    <property type="match status" value="1"/>
</dbReference>
<dbReference type="FunFam" id="3.30.390.10:FF:000001">
    <property type="entry name" value="Enolase"/>
    <property type="match status" value="1"/>
</dbReference>
<dbReference type="Gene3D" id="3.20.20.120">
    <property type="entry name" value="Enolase-like C-terminal domain"/>
    <property type="match status" value="1"/>
</dbReference>
<dbReference type="Gene3D" id="3.30.390.10">
    <property type="entry name" value="Enolase-like, N-terminal domain"/>
    <property type="match status" value="1"/>
</dbReference>
<dbReference type="HAMAP" id="MF_00318">
    <property type="entry name" value="Enolase"/>
    <property type="match status" value="1"/>
</dbReference>
<dbReference type="InterPro" id="IPR000941">
    <property type="entry name" value="Enolase"/>
</dbReference>
<dbReference type="InterPro" id="IPR036849">
    <property type="entry name" value="Enolase-like_C_sf"/>
</dbReference>
<dbReference type="InterPro" id="IPR029017">
    <property type="entry name" value="Enolase-like_N"/>
</dbReference>
<dbReference type="InterPro" id="IPR020810">
    <property type="entry name" value="Enolase_C"/>
</dbReference>
<dbReference type="InterPro" id="IPR020809">
    <property type="entry name" value="Enolase_CS"/>
</dbReference>
<dbReference type="InterPro" id="IPR020811">
    <property type="entry name" value="Enolase_N"/>
</dbReference>
<dbReference type="NCBIfam" id="TIGR01060">
    <property type="entry name" value="eno"/>
    <property type="match status" value="1"/>
</dbReference>
<dbReference type="PANTHER" id="PTHR11902">
    <property type="entry name" value="ENOLASE"/>
    <property type="match status" value="1"/>
</dbReference>
<dbReference type="PANTHER" id="PTHR11902:SF1">
    <property type="entry name" value="ENOLASE"/>
    <property type="match status" value="1"/>
</dbReference>
<dbReference type="Pfam" id="PF00113">
    <property type="entry name" value="Enolase_C"/>
    <property type="match status" value="1"/>
</dbReference>
<dbReference type="Pfam" id="PF03952">
    <property type="entry name" value="Enolase_N"/>
    <property type="match status" value="1"/>
</dbReference>
<dbReference type="PIRSF" id="PIRSF001400">
    <property type="entry name" value="Enolase"/>
    <property type="match status" value="1"/>
</dbReference>
<dbReference type="PRINTS" id="PR00148">
    <property type="entry name" value="ENOLASE"/>
</dbReference>
<dbReference type="SFLD" id="SFLDF00002">
    <property type="entry name" value="enolase"/>
    <property type="match status" value="1"/>
</dbReference>
<dbReference type="SFLD" id="SFLDG00178">
    <property type="entry name" value="enolase"/>
    <property type="match status" value="1"/>
</dbReference>
<dbReference type="SMART" id="SM01192">
    <property type="entry name" value="Enolase_C"/>
    <property type="match status" value="1"/>
</dbReference>
<dbReference type="SMART" id="SM01193">
    <property type="entry name" value="Enolase_N"/>
    <property type="match status" value="1"/>
</dbReference>
<dbReference type="SUPFAM" id="SSF51604">
    <property type="entry name" value="Enolase C-terminal domain-like"/>
    <property type="match status" value="1"/>
</dbReference>
<dbReference type="SUPFAM" id="SSF54826">
    <property type="entry name" value="Enolase N-terminal domain-like"/>
    <property type="match status" value="1"/>
</dbReference>
<dbReference type="PROSITE" id="PS00164">
    <property type="entry name" value="ENOLASE"/>
    <property type="match status" value="1"/>
</dbReference>
<keyword id="KW-0963">Cytoplasm</keyword>
<keyword id="KW-0903">Direct protein sequencing</keyword>
<keyword id="KW-0324">Glycolysis</keyword>
<keyword id="KW-0456">Lyase</keyword>
<keyword id="KW-0460">Magnesium</keyword>
<keyword id="KW-0479">Metal-binding</keyword>
<keyword id="KW-0964">Secreted</keyword>
<gene>
    <name evidence="2" type="primary">eno</name>
    <name type="ORF">HMPREF9496_02150</name>
</gene>
<protein>
    <recommendedName>
        <fullName evidence="2">Enolase</fullName>
        <ecNumber evidence="2">4.2.1.11</ecNumber>
    </recommendedName>
    <alternativeName>
        <fullName evidence="2">2-phospho-D-glycerate hydro-lyase</fullName>
    </alternativeName>
    <alternativeName>
        <fullName evidence="2">2-phosphoglycerate dehydratase</fullName>
    </alternativeName>
</protein>